<sequence>MDLKILSLATDKTTDKLQEFLQTLKDDDLASLLQNQAVKGRAVGTLLRAVLKGSPCSEEDGALRRYKIYSCCIQLVESGDLQQDVASEIIGLLMLEVHHFPGPLLVDLASDFVGAVREDRLVNGKSLELLPIILTALATKKEVLACGKGDLNGEEYKRQLIDTLCSVRWPQRYMIQLTSVFKDVCLTPEEMNLVVAKVLTMFSKLNLQEIPPLVYQLLVLSSKGSRRSVLDGIIAFFRELDKQHREEQSSDELSELITAPADELYHVEGTVILHIVFAIKLDCELGRELLKHLKAGQQGDPSKCLCPFSIALLLSLTRIQRFEEQVFDLLKTSVVKSFKDLQLLQGSKFLQTLVPQRTCVSTMILEVVRNSVHSWDHVTQGLIEFGFILMDSYGPKKILDGKAVEIGTSLSKMTNQHACKLGANILLETFKIHEMIRQEILEQVLNRVVTRTSSPINHFLDLFSDIIMYAPLILQNCSKVTETFDYLTFLPLQTVQGLLKAVQPLLKISMSMRDSLILVLRKAMFASQLDARKSAVAGFLLLLKNFKVLGSLPSSQCTQSIGVTQVRVDVHSRYSAVANETFCLEIIDSLKRSLGQQADIRLMLYDGFYDVLRRNSQLASSIMQTLFSQLKQFYEPEPDLLPPLKLGACVLTQGSQIFLQEPLDHLLSCIQHCLAWYKSRVVPLQQGDEGEEEEEELYSELDDMLESITVRMIKSELEDFELDKSADFSQNTNVGIKNNICACLIMGVCEVLMEYNFSISNFSKSKFEEILSLFTCYKKFSDILSEKAGKGKAKMTSKVSDSLLSLKFVSDLLTALFRDSIQSHEESLSVLRSSGEFMHYAVNVTLQKIQQLIRTGHVSGPDGQNPDKIFQNLCDITRVLLWRYTSIPTSVEESGKKEKGKSISLLCLEGLQKTFSVVLQFYQPKVQQFLQALDVMGTEEEEAGVTVTQRASFQIRQFQRSLLNLLSSEEDDFNSKEALLLIAVLSTLSRLLEPTSPQFVQMLSWTSKICKEYSQEDASFCKSLMNLFFSLHVLYKSPVTLLRDLSQDIHGQLGDIDQDVEIEKTDHFAVVNLRTAAPTVCLLVLSQAEKVLEEVDWLIAKIKGSANQETLSDKVTPEDASSQAVPPTLLIEKAIVMQLGTLVTFFHELVQTALPSGSCVDTLLKGLSKIYSTLTAFVKYYLQVCQSSRGIPNTVEKLVKLSGSHLTPVCYSFISYVQNKSSDAPKCSEKEKAAVSTTMAKVLRETKPIPNLVFAIEQYEKFLIQLSKKSKVNLMQHMKLSTSRDFKIKGSVLDMVLREDEEDENEEGTASAHTQQDREPAKKRRKKCLS</sequence>
<proteinExistence type="evidence at protein level"/>
<protein>
    <recommendedName>
        <fullName>Fanconi anemia group I protein homolog</fullName>
        <shortName>Protein FACI</shortName>
    </recommendedName>
</protein>
<dbReference type="EMBL" id="AC110909">
    <property type="status" value="NOT_ANNOTATED_CDS"/>
    <property type="molecule type" value="Genomic_DNA"/>
</dbReference>
<dbReference type="EMBL" id="BC027836">
    <property type="status" value="NOT_ANNOTATED_CDS"/>
    <property type="molecule type" value="mRNA"/>
</dbReference>
<dbReference type="EMBL" id="AK085572">
    <property type="protein sequence ID" value="BAC39475.1"/>
    <property type="status" value="ALT_INIT"/>
    <property type="molecule type" value="mRNA"/>
</dbReference>
<dbReference type="CCDS" id="CCDS39991.1">
    <molecule id="Q8K368-1"/>
</dbReference>
<dbReference type="RefSeq" id="NP_666058.2">
    <molecule id="Q8K368-1"/>
    <property type="nucleotide sequence ID" value="NM_145946.2"/>
</dbReference>
<dbReference type="PDB" id="3S4W">
    <property type="method" value="X-ray"/>
    <property type="resolution" value="3.41 A"/>
    <property type="chains" value="A=1-1302"/>
</dbReference>
<dbReference type="PDB" id="3S4Z">
    <property type="method" value="X-ray"/>
    <property type="resolution" value="7.80 A"/>
    <property type="chains" value="A/B/C=1-1302"/>
</dbReference>
<dbReference type="PDB" id="3S51">
    <property type="method" value="X-ray"/>
    <property type="resolution" value="3.30 A"/>
    <property type="chains" value="A/B/C/D=1-1302"/>
</dbReference>
<dbReference type="PDBsum" id="3S4W"/>
<dbReference type="PDBsum" id="3S4Z"/>
<dbReference type="PDBsum" id="3S51"/>
<dbReference type="SMR" id="Q8K368"/>
<dbReference type="BioGRID" id="229017">
    <property type="interactions" value="7"/>
</dbReference>
<dbReference type="FunCoup" id="Q8K368">
    <property type="interactions" value="2766"/>
</dbReference>
<dbReference type="STRING" id="10090.ENSMUSP00000044931"/>
<dbReference type="iPTMnet" id="Q8K368"/>
<dbReference type="PhosphoSitePlus" id="Q8K368"/>
<dbReference type="PaxDb" id="10090-ENSMUSP00000044931"/>
<dbReference type="PeptideAtlas" id="Q8K368"/>
<dbReference type="ProteomicsDB" id="267712">
    <molecule id="Q8K368-1"/>
</dbReference>
<dbReference type="ProteomicsDB" id="267713">
    <molecule id="Q8K368-2"/>
</dbReference>
<dbReference type="ProteomicsDB" id="267714">
    <molecule id="Q8K368-4"/>
</dbReference>
<dbReference type="Pumba" id="Q8K368"/>
<dbReference type="Antibodypedia" id="15714">
    <property type="antibodies" value="134 antibodies from 25 providers"/>
</dbReference>
<dbReference type="DNASU" id="208836"/>
<dbReference type="Ensembl" id="ENSMUST00000036865.13">
    <molecule id="Q8K368-1"/>
    <property type="protein sequence ID" value="ENSMUSP00000044931.7"/>
    <property type="gene ID" value="ENSMUSG00000039187.17"/>
</dbReference>
<dbReference type="Ensembl" id="ENSMUST00000132091.8">
    <molecule id="Q8K368-2"/>
    <property type="protein sequence ID" value="ENSMUSP00000122113.2"/>
    <property type="gene ID" value="ENSMUSG00000039187.17"/>
</dbReference>
<dbReference type="GeneID" id="208836"/>
<dbReference type="KEGG" id="mmu:208836"/>
<dbReference type="UCSC" id="uc009hyh.1">
    <molecule id="Q8K368-1"/>
    <property type="organism name" value="mouse"/>
</dbReference>
<dbReference type="AGR" id="MGI:2384790"/>
<dbReference type="CTD" id="55215"/>
<dbReference type="MGI" id="MGI:2384790">
    <property type="gene designation" value="Fanci"/>
</dbReference>
<dbReference type="VEuPathDB" id="HostDB:ENSMUSG00000039187"/>
<dbReference type="eggNOG" id="KOG4553">
    <property type="taxonomic scope" value="Eukaryota"/>
</dbReference>
<dbReference type="GeneTree" id="ENSGT00390000005855"/>
<dbReference type="HOGENOM" id="CLU_700118_0_0_1"/>
<dbReference type="InParanoid" id="Q8K368"/>
<dbReference type="OMA" id="QSMRMMN"/>
<dbReference type="OrthoDB" id="195089at2759"/>
<dbReference type="PhylomeDB" id="Q8K368"/>
<dbReference type="TreeFam" id="TF323694"/>
<dbReference type="Reactome" id="R-MMU-6783310">
    <property type="pathway name" value="Fanconi Anemia Pathway"/>
</dbReference>
<dbReference type="BioGRID-ORCS" id="208836">
    <property type="hits" value="28 hits in 116 CRISPR screens"/>
</dbReference>
<dbReference type="ChiTaRS" id="Fanci">
    <property type="organism name" value="mouse"/>
</dbReference>
<dbReference type="EvolutionaryTrace" id="Q8K368"/>
<dbReference type="PRO" id="PR:Q8K368"/>
<dbReference type="Proteomes" id="UP000000589">
    <property type="component" value="Chromosome 7"/>
</dbReference>
<dbReference type="RNAct" id="Q8K368">
    <property type="molecule type" value="protein"/>
</dbReference>
<dbReference type="Bgee" id="ENSMUSG00000039187">
    <property type="expression patterns" value="Expressed in ear vesicle and 136 other cell types or tissues"/>
</dbReference>
<dbReference type="ExpressionAtlas" id="Q8K368">
    <property type="expression patterns" value="baseline and differential"/>
</dbReference>
<dbReference type="GO" id="GO:0005737">
    <property type="term" value="C:cytoplasm"/>
    <property type="evidence" value="ECO:0000250"/>
    <property type="project" value="UniProtKB"/>
</dbReference>
<dbReference type="GO" id="GO:0005829">
    <property type="term" value="C:cytosol"/>
    <property type="evidence" value="ECO:0007669"/>
    <property type="project" value="Ensembl"/>
</dbReference>
<dbReference type="GO" id="GO:1990391">
    <property type="term" value="C:DNA repair complex"/>
    <property type="evidence" value="ECO:0007669"/>
    <property type="project" value="Ensembl"/>
</dbReference>
<dbReference type="GO" id="GO:0005654">
    <property type="term" value="C:nucleoplasm"/>
    <property type="evidence" value="ECO:0007669"/>
    <property type="project" value="Ensembl"/>
</dbReference>
<dbReference type="GO" id="GO:0070182">
    <property type="term" value="F:DNA polymerase binding"/>
    <property type="evidence" value="ECO:0007669"/>
    <property type="project" value="Ensembl"/>
</dbReference>
<dbReference type="GO" id="GO:0006281">
    <property type="term" value="P:DNA repair"/>
    <property type="evidence" value="ECO:0007669"/>
    <property type="project" value="UniProtKB-KW"/>
</dbReference>
<dbReference type="GO" id="GO:0031398">
    <property type="term" value="P:positive regulation of protein ubiquitination"/>
    <property type="evidence" value="ECO:0000266"/>
    <property type="project" value="MGI"/>
</dbReference>
<dbReference type="CDD" id="cd11720">
    <property type="entry name" value="FANCI"/>
    <property type="match status" value="1"/>
</dbReference>
<dbReference type="DisProt" id="DP02613"/>
<dbReference type="IDEAL" id="IID50341"/>
<dbReference type="InterPro" id="IPR026171">
    <property type="entry name" value="FANCI"/>
</dbReference>
<dbReference type="InterPro" id="IPR029310">
    <property type="entry name" value="FANCI_HD1"/>
</dbReference>
<dbReference type="InterPro" id="IPR029312">
    <property type="entry name" value="FANCI_HD2"/>
</dbReference>
<dbReference type="InterPro" id="IPR029308">
    <property type="entry name" value="FANCI_S1"/>
</dbReference>
<dbReference type="InterPro" id="IPR029305">
    <property type="entry name" value="FANCI_S1-cap"/>
</dbReference>
<dbReference type="InterPro" id="IPR029315">
    <property type="entry name" value="FANCI_S2"/>
</dbReference>
<dbReference type="InterPro" id="IPR029313">
    <property type="entry name" value="FANCI_S3"/>
</dbReference>
<dbReference type="InterPro" id="IPR029314">
    <property type="entry name" value="FANCI_S4"/>
</dbReference>
<dbReference type="PANTHER" id="PTHR21818">
    <property type="entry name" value="BC025462 PROTEIN"/>
    <property type="match status" value="1"/>
</dbReference>
<dbReference type="PANTHER" id="PTHR21818:SF0">
    <property type="entry name" value="FANCONI ANEMIA GROUP I PROTEIN"/>
    <property type="match status" value="1"/>
</dbReference>
<dbReference type="Pfam" id="PF14679">
    <property type="entry name" value="FANCI_HD1"/>
    <property type="match status" value="1"/>
</dbReference>
<dbReference type="Pfam" id="PF14680">
    <property type="entry name" value="FANCI_HD2"/>
    <property type="match status" value="1"/>
</dbReference>
<dbReference type="Pfam" id="PF14675">
    <property type="entry name" value="FANCI_S1"/>
    <property type="match status" value="1"/>
</dbReference>
<dbReference type="Pfam" id="PF14674">
    <property type="entry name" value="FANCI_S1-cap"/>
    <property type="match status" value="1"/>
</dbReference>
<dbReference type="Pfam" id="PF14676">
    <property type="entry name" value="FANCI_S2"/>
    <property type="match status" value="1"/>
</dbReference>
<dbReference type="Pfam" id="PF14677">
    <property type="entry name" value="FANCI_S3"/>
    <property type="match status" value="1"/>
</dbReference>
<dbReference type="Pfam" id="PF14678">
    <property type="entry name" value="FANCI_S4"/>
    <property type="match status" value="1"/>
</dbReference>
<reference key="1">
    <citation type="journal article" date="2009" name="PLoS Biol.">
        <title>Lineage-specific biology revealed by a finished genome assembly of the mouse.</title>
        <authorList>
            <person name="Church D.M."/>
            <person name="Goodstadt L."/>
            <person name="Hillier L.W."/>
            <person name="Zody M.C."/>
            <person name="Goldstein S."/>
            <person name="She X."/>
            <person name="Bult C.J."/>
            <person name="Agarwala R."/>
            <person name="Cherry J.L."/>
            <person name="DiCuccio M."/>
            <person name="Hlavina W."/>
            <person name="Kapustin Y."/>
            <person name="Meric P."/>
            <person name="Maglott D."/>
            <person name="Birtle Z."/>
            <person name="Marques A.C."/>
            <person name="Graves T."/>
            <person name="Zhou S."/>
            <person name="Teague B."/>
            <person name="Potamousis K."/>
            <person name="Churas C."/>
            <person name="Place M."/>
            <person name="Herschleb J."/>
            <person name="Runnheim R."/>
            <person name="Forrest D."/>
            <person name="Amos-Landgraf J."/>
            <person name="Schwartz D.C."/>
            <person name="Cheng Z."/>
            <person name="Lindblad-Toh K."/>
            <person name="Eichler E.E."/>
            <person name="Ponting C.P."/>
        </authorList>
    </citation>
    <scope>NUCLEOTIDE SEQUENCE [LARGE SCALE GENOMIC DNA]</scope>
    <source>
        <strain>C57BL/6J</strain>
    </source>
</reference>
<reference key="2">
    <citation type="journal article" date="2004" name="Genome Res.">
        <title>The status, quality, and expansion of the NIH full-length cDNA project: the Mammalian Gene Collection (MGC).</title>
        <authorList>
            <consortium name="The MGC Project Team"/>
        </authorList>
    </citation>
    <scope>NUCLEOTIDE SEQUENCE [LARGE SCALE MRNA] (ISOFORM 2)</scope>
    <source>
        <strain>FVB/N</strain>
        <tissue>Mammary tumor</tissue>
    </source>
</reference>
<reference key="3">
    <citation type="journal article" date="2005" name="Science">
        <title>The transcriptional landscape of the mammalian genome.</title>
        <authorList>
            <person name="Carninci P."/>
            <person name="Kasukawa T."/>
            <person name="Katayama S."/>
            <person name="Gough J."/>
            <person name="Frith M.C."/>
            <person name="Maeda N."/>
            <person name="Oyama R."/>
            <person name="Ravasi T."/>
            <person name="Lenhard B."/>
            <person name="Wells C."/>
            <person name="Kodzius R."/>
            <person name="Shimokawa K."/>
            <person name="Bajic V.B."/>
            <person name="Brenner S.E."/>
            <person name="Batalov S."/>
            <person name="Forrest A.R."/>
            <person name="Zavolan M."/>
            <person name="Davis M.J."/>
            <person name="Wilming L.G."/>
            <person name="Aidinis V."/>
            <person name="Allen J.E."/>
            <person name="Ambesi-Impiombato A."/>
            <person name="Apweiler R."/>
            <person name="Aturaliya R.N."/>
            <person name="Bailey T.L."/>
            <person name="Bansal M."/>
            <person name="Baxter L."/>
            <person name="Beisel K.W."/>
            <person name="Bersano T."/>
            <person name="Bono H."/>
            <person name="Chalk A.M."/>
            <person name="Chiu K.P."/>
            <person name="Choudhary V."/>
            <person name="Christoffels A."/>
            <person name="Clutterbuck D.R."/>
            <person name="Crowe M.L."/>
            <person name="Dalla E."/>
            <person name="Dalrymple B.P."/>
            <person name="de Bono B."/>
            <person name="Della Gatta G."/>
            <person name="di Bernardo D."/>
            <person name="Down T."/>
            <person name="Engstrom P."/>
            <person name="Fagiolini M."/>
            <person name="Faulkner G."/>
            <person name="Fletcher C.F."/>
            <person name="Fukushima T."/>
            <person name="Furuno M."/>
            <person name="Futaki S."/>
            <person name="Gariboldi M."/>
            <person name="Georgii-Hemming P."/>
            <person name="Gingeras T.R."/>
            <person name="Gojobori T."/>
            <person name="Green R.E."/>
            <person name="Gustincich S."/>
            <person name="Harbers M."/>
            <person name="Hayashi Y."/>
            <person name="Hensch T.K."/>
            <person name="Hirokawa N."/>
            <person name="Hill D."/>
            <person name="Huminiecki L."/>
            <person name="Iacono M."/>
            <person name="Ikeo K."/>
            <person name="Iwama A."/>
            <person name="Ishikawa T."/>
            <person name="Jakt M."/>
            <person name="Kanapin A."/>
            <person name="Katoh M."/>
            <person name="Kawasawa Y."/>
            <person name="Kelso J."/>
            <person name="Kitamura H."/>
            <person name="Kitano H."/>
            <person name="Kollias G."/>
            <person name="Krishnan S.P."/>
            <person name="Kruger A."/>
            <person name="Kummerfeld S.K."/>
            <person name="Kurochkin I.V."/>
            <person name="Lareau L.F."/>
            <person name="Lazarevic D."/>
            <person name="Lipovich L."/>
            <person name="Liu J."/>
            <person name="Liuni S."/>
            <person name="McWilliam S."/>
            <person name="Madan Babu M."/>
            <person name="Madera M."/>
            <person name="Marchionni L."/>
            <person name="Matsuda H."/>
            <person name="Matsuzawa S."/>
            <person name="Miki H."/>
            <person name="Mignone F."/>
            <person name="Miyake S."/>
            <person name="Morris K."/>
            <person name="Mottagui-Tabar S."/>
            <person name="Mulder N."/>
            <person name="Nakano N."/>
            <person name="Nakauchi H."/>
            <person name="Ng P."/>
            <person name="Nilsson R."/>
            <person name="Nishiguchi S."/>
            <person name="Nishikawa S."/>
            <person name="Nori F."/>
            <person name="Ohara O."/>
            <person name="Okazaki Y."/>
            <person name="Orlando V."/>
            <person name="Pang K.C."/>
            <person name="Pavan W.J."/>
            <person name="Pavesi G."/>
            <person name="Pesole G."/>
            <person name="Petrovsky N."/>
            <person name="Piazza S."/>
            <person name="Reed J."/>
            <person name="Reid J.F."/>
            <person name="Ring B.Z."/>
            <person name="Ringwald M."/>
            <person name="Rost B."/>
            <person name="Ruan Y."/>
            <person name="Salzberg S.L."/>
            <person name="Sandelin A."/>
            <person name="Schneider C."/>
            <person name="Schoenbach C."/>
            <person name="Sekiguchi K."/>
            <person name="Semple C.A."/>
            <person name="Seno S."/>
            <person name="Sessa L."/>
            <person name="Sheng Y."/>
            <person name="Shibata Y."/>
            <person name="Shimada H."/>
            <person name="Shimada K."/>
            <person name="Silva D."/>
            <person name="Sinclair B."/>
            <person name="Sperling S."/>
            <person name="Stupka E."/>
            <person name="Sugiura K."/>
            <person name="Sultana R."/>
            <person name="Takenaka Y."/>
            <person name="Taki K."/>
            <person name="Tammoja K."/>
            <person name="Tan S.L."/>
            <person name="Tang S."/>
            <person name="Taylor M.S."/>
            <person name="Tegner J."/>
            <person name="Teichmann S.A."/>
            <person name="Ueda H.R."/>
            <person name="van Nimwegen E."/>
            <person name="Verardo R."/>
            <person name="Wei C.L."/>
            <person name="Yagi K."/>
            <person name="Yamanishi H."/>
            <person name="Zabarovsky E."/>
            <person name="Zhu S."/>
            <person name="Zimmer A."/>
            <person name="Hide W."/>
            <person name="Bult C."/>
            <person name="Grimmond S.M."/>
            <person name="Teasdale R.D."/>
            <person name="Liu E.T."/>
            <person name="Brusic V."/>
            <person name="Quackenbush J."/>
            <person name="Wahlestedt C."/>
            <person name="Mattick J.S."/>
            <person name="Hume D.A."/>
            <person name="Kai C."/>
            <person name="Sasaki D."/>
            <person name="Tomaru Y."/>
            <person name="Fukuda S."/>
            <person name="Kanamori-Katayama M."/>
            <person name="Suzuki M."/>
            <person name="Aoki J."/>
            <person name="Arakawa T."/>
            <person name="Iida J."/>
            <person name="Imamura K."/>
            <person name="Itoh M."/>
            <person name="Kato T."/>
            <person name="Kawaji H."/>
            <person name="Kawagashira N."/>
            <person name="Kawashima T."/>
            <person name="Kojima M."/>
            <person name="Kondo S."/>
            <person name="Konno H."/>
            <person name="Nakano K."/>
            <person name="Ninomiya N."/>
            <person name="Nishio T."/>
            <person name="Okada M."/>
            <person name="Plessy C."/>
            <person name="Shibata K."/>
            <person name="Shiraki T."/>
            <person name="Suzuki S."/>
            <person name="Tagami M."/>
            <person name="Waki K."/>
            <person name="Watahiki A."/>
            <person name="Okamura-Oho Y."/>
            <person name="Suzuki H."/>
            <person name="Kawai J."/>
            <person name="Hayashizaki Y."/>
        </authorList>
    </citation>
    <scope>NUCLEOTIDE SEQUENCE [LARGE SCALE MRNA] OF 27-1330 (ISOFORM 4)</scope>
    <source>
        <strain>C57BL/6J</strain>
        <tissue>Kidney</tissue>
    </source>
</reference>
<reference key="4">
    <citation type="journal article" date="2007" name="Cell">
        <title>Identification of the FANCI protein, a monoubiquitinated FANCD2 paralog required for DNA repair.</title>
        <authorList>
            <person name="Smogorzewska A."/>
            <person name="Matsuoka S."/>
            <person name="Vinciguerra P."/>
            <person name="McDonald E.R. III"/>
            <person name="Hurov K.E."/>
            <person name="Luo J."/>
            <person name="Ballif B.A."/>
            <person name="Gygi S.P."/>
            <person name="Hofmann K."/>
            <person name="D'Andrea A.D."/>
            <person name="Elledge S.J."/>
        </authorList>
    </citation>
    <scope>PHOSPHORYLATION AT SER-555 AND THR-558</scope>
</reference>
<reference key="5">
    <citation type="journal article" date="2007" name="Nat. Struct. Mol. Biol.">
        <title>FANCI is a second monoubiquitinated member of the Fanconi anemia pathway.</title>
        <authorList>
            <person name="Sims A.E."/>
            <person name="Spiteri E."/>
            <person name="Sims R.J. III"/>
            <person name="Arita A.G."/>
            <person name="Lach F.P."/>
            <person name="Landers T."/>
            <person name="Wurm M."/>
            <person name="Freund M."/>
            <person name="Neveling K."/>
            <person name="Hanenberg H."/>
            <person name="Auerbach A.D."/>
            <person name="Huang T.T."/>
        </authorList>
    </citation>
    <scope>IDENTIFICATION</scope>
</reference>
<reference key="6">
    <citation type="journal article" date="2010" name="Cell">
        <title>A tissue-specific atlas of mouse protein phosphorylation and expression.</title>
        <authorList>
            <person name="Huttlin E.L."/>
            <person name="Jedrychowski M.P."/>
            <person name="Elias J.E."/>
            <person name="Goswami T."/>
            <person name="Rad R."/>
            <person name="Beausoleil S.A."/>
            <person name="Villen J."/>
            <person name="Haas W."/>
            <person name="Sowa M.E."/>
            <person name="Gygi S.P."/>
        </authorList>
    </citation>
    <scope>IDENTIFICATION BY MASS SPECTROMETRY [LARGE SCALE ANALYSIS]</scope>
    <source>
        <tissue>Spleen</tissue>
        <tissue>Testis</tissue>
    </source>
</reference>
<reference key="7">
    <citation type="journal article" date="2011" name="Science">
        <title>Structure of the FANCI-FANCD2 complex: insights into the Fanconi anemia DNA repair pathway.</title>
        <authorList>
            <person name="Joo W."/>
            <person name="Xu G."/>
            <person name="Persky N.S."/>
            <person name="Smogorzewska A."/>
            <person name="Rudge D.G."/>
            <person name="Buzovetsky O."/>
            <person name="Elledge S.J."/>
            <person name="Pavletich N.P."/>
        </authorList>
    </citation>
    <scope>X-RAY CRYSTALLOGRAPHY (3.30 ANGSTROMS) OF 1-1302</scope>
</reference>
<keyword id="KW-0002">3D-structure</keyword>
<keyword id="KW-0025">Alternative splicing</keyword>
<keyword id="KW-0131">Cell cycle</keyword>
<keyword id="KW-0963">Cytoplasm</keyword>
<keyword id="KW-0227">DNA damage</keyword>
<keyword id="KW-0234">DNA repair</keyword>
<keyword id="KW-1017">Isopeptide bond</keyword>
<keyword id="KW-0539">Nucleus</keyword>
<keyword id="KW-0597">Phosphoprotein</keyword>
<keyword id="KW-1185">Reference proteome</keyword>
<keyword id="KW-0832">Ubl conjugation</keyword>
<feature type="chain" id="PRO_0000289977" description="Fanconi anemia group I protein homolog">
    <location>
        <begin position="1"/>
        <end position="1330"/>
    </location>
</feature>
<feature type="region of interest" description="Disordered" evidence="4">
    <location>
        <begin position="1299"/>
        <end position="1330"/>
    </location>
</feature>
<feature type="compositionally biased region" description="Basic residues" evidence="4">
    <location>
        <begin position="1321"/>
        <end position="1330"/>
    </location>
</feature>
<feature type="modified residue" description="Phosphoserine" evidence="5">
    <location>
        <position position="555"/>
    </location>
</feature>
<feature type="modified residue" description="Phosphothreonine" evidence="5">
    <location>
        <position position="558"/>
    </location>
</feature>
<feature type="modified residue" description="Phosphoserine" evidence="3">
    <location>
        <position position="729"/>
    </location>
</feature>
<feature type="modified residue" description="Phosphothreonine" evidence="3">
    <location>
        <position position="948"/>
    </location>
</feature>
<feature type="modified residue" description="Phosphoserine" evidence="3">
    <location>
        <position position="1122"/>
    </location>
</feature>
<feature type="cross-link" description="Glycyl lysine isopeptide (Lys-Gly) (interchain with G-Cter in ubiquitin)" evidence="3">
    <location>
        <position position="522"/>
    </location>
</feature>
<feature type="splice variant" id="VSP_026072" description="In isoform 2." evidence="7">
    <original>SVHSWDHVTQGLIEFGFILMDSYG</original>
    <variation>RLVFRYHHVCTFNSSELFKSHGNF</variation>
    <location>
        <begin position="371"/>
        <end position="394"/>
    </location>
</feature>
<feature type="splice variant" id="VSP_026073" description="In isoform 2." evidence="7">
    <location>
        <begin position="395"/>
        <end position="1330"/>
    </location>
</feature>
<feature type="splice variant" id="VSP_026074" description="In isoform 4." evidence="8">
    <location>
        <begin position="879"/>
        <end position="1330"/>
    </location>
</feature>
<feature type="sequence conflict" description="In Ref. 3; BAC39475." evidence="9" ref="3">
    <original>L</original>
    <variation>W</variation>
    <location>
        <position position="540"/>
    </location>
</feature>
<feature type="helix" evidence="11">
    <location>
        <begin position="2"/>
        <end position="11"/>
    </location>
</feature>
<feature type="helix" evidence="11">
    <location>
        <begin position="15"/>
        <end position="24"/>
    </location>
</feature>
<feature type="helix" evidence="11">
    <location>
        <begin position="29"/>
        <end position="38"/>
    </location>
</feature>
<feature type="helix" evidence="11">
    <location>
        <begin position="40"/>
        <end position="44"/>
    </location>
</feature>
<feature type="helix" evidence="11">
    <location>
        <begin position="46"/>
        <end position="51"/>
    </location>
</feature>
<feature type="strand" evidence="11">
    <location>
        <begin position="56"/>
        <end position="58"/>
    </location>
</feature>
<feature type="helix" evidence="11">
    <location>
        <begin position="59"/>
        <end position="78"/>
    </location>
</feature>
<feature type="helix" evidence="11">
    <location>
        <begin position="83"/>
        <end position="96"/>
    </location>
</feature>
<feature type="helix" evidence="11">
    <location>
        <begin position="97"/>
        <end position="99"/>
    </location>
</feature>
<feature type="helix" evidence="11">
    <location>
        <begin position="102"/>
        <end position="117"/>
    </location>
</feature>
<feature type="turn" evidence="11">
    <location>
        <begin position="125"/>
        <end position="128"/>
    </location>
</feature>
<feature type="helix" evidence="11">
    <location>
        <begin position="129"/>
        <end position="138"/>
    </location>
</feature>
<feature type="strand" evidence="11">
    <location>
        <begin position="145"/>
        <end position="148"/>
    </location>
</feature>
<feature type="helix" evidence="11">
    <location>
        <begin position="153"/>
        <end position="166"/>
    </location>
</feature>
<feature type="turn" evidence="11">
    <location>
        <begin position="171"/>
        <end position="173"/>
    </location>
</feature>
<feature type="helix" evidence="11">
    <location>
        <begin position="174"/>
        <end position="180"/>
    </location>
</feature>
<feature type="helix" evidence="11">
    <location>
        <begin position="181"/>
        <end position="183"/>
    </location>
</feature>
<feature type="helix" evidence="11">
    <location>
        <begin position="188"/>
        <end position="202"/>
    </location>
</feature>
<feature type="helix" evidence="11">
    <location>
        <begin position="207"/>
        <end position="209"/>
    </location>
</feature>
<feature type="helix" evidence="11">
    <location>
        <begin position="210"/>
        <end position="221"/>
    </location>
</feature>
<feature type="helix" evidence="11">
    <location>
        <begin position="226"/>
        <end position="248"/>
    </location>
</feature>
<feature type="helix" evidence="11">
    <location>
        <begin position="261"/>
        <end position="281"/>
    </location>
</feature>
<feature type="helix" evidence="11">
    <location>
        <begin position="283"/>
        <end position="293"/>
    </location>
</feature>
<feature type="helix" evidence="11">
    <location>
        <begin position="299"/>
        <end position="304"/>
    </location>
</feature>
<feature type="helix" evidence="11">
    <location>
        <begin position="307"/>
        <end position="316"/>
    </location>
</feature>
<feature type="helix" evidence="11">
    <location>
        <begin position="320"/>
        <end position="322"/>
    </location>
</feature>
<feature type="helix" evidence="11">
    <location>
        <begin position="323"/>
        <end position="344"/>
    </location>
</feature>
<feature type="helix" evidence="11">
    <location>
        <begin position="348"/>
        <end position="353"/>
    </location>
</feature>
<feature type="helix" evidence="11">
    <location>
        <begin position="360"/>
        <end position="370"/>
    </location>
</feature>
<feature type="turn" evidence="11">
    <location>
        <begin position="371"/>
        <end position="374"/>
    </location>
</feature>
<feature type="helix" evidence="11">
    <location>
        <begin position="377"/>
        <end position="393"/>
    </location>
</feature>
<feature type="turn" evidence="10">
    <location>
        <begin position="397"/>
        <end position="399"/>
    </location>
</feature>
<feature type="helix" evidence="11">
    <location>
        <begin position="413"/>
        <end position="432"/>
    </location>
</feature>
<feature type="helix" evidence="11">
    <location>
        <begin position="434"/>
        <end position="436"/>
    </location>
</feature>
<feature type="helix" evidence="11">
    <location>
        <begin position="437"/>
        <end position="450"/>
    </location>
</feature>
<feature type="helix" evidence="11">
    <location>
        <begin position="457"/>
        <end position="469"/>
    </location>
</feature>
<feature type="helix" evidence="11">
    <location>
        <begin position="471"/>
        <end position="474"/>
    </location>
</feature>
<feature type="helix" evidence="11">
    <location>
        <begin position="478"/>
        <end position="481"/>
    </location>
</feature>
<feature type="helix" evidence="11">
    <location>
        <begin position="482"/>
        <end position="486"/>
    </location>
</feature>
<feature type="turn" evidence="11">
    <location>
        <begin position="487"/>
        <end position="489"/>
    </location>
</feature>
<feature type="helix" evidence="11">
    <location>
        <begin position="492"/>
        <end position="506"/>
    </location>
</feature>
<feature type="helix" evidence="11">
    <location>
        <begin position="510"/>
        <end position="523"/>
    </location>
</feature>
<feature type="helix" evidence="11">
    <location>
        <begin position="529"/>
        <end position="545"/>
    </location>
</feature>
<feature type="helix" evidence="10">
    <location>
        <begin position="546"/>
        <end position="549"/>
    </location>
</feature>
<feature type="helix" evidence="10">
    <location>
        <begin position="555"/>
        <end position="559"/>
    </location>
</feature>
<feature type="turn" evidence="10">
    <location>
        <begin position="560"/>
        <end position="562"/>
    </location>
</feature>
<feature type="strand" evidence="11">
    <location>
        <begin position="566"/>
        <end position="570"/>
    </location>
</feature>
<feature type="strand" evidence="11">
    <location>
        <begin position="572"/>
        <end position="574"/>
    </location>
</feature>
<feature type="helix" evidence="11">
    <location>
        <begin position="582"/>
        <end position="591"/>
    </location>
</feature>
<feature type="helix" evidence="11">
    <location>
        <begin position="592"/>
        <end position="595"/>
    </location>
</feature>
<feature type="helix" evidence="11">
    <location>
        <begin position="598"/>
        <end position="614"/>
    </location>
</feature>
<feature type="helix" evidence="11">
    <location>
        <begin position="616"/>
        <end position="618"/>
    </location>
</feature>
<feature type="helix" evidence="11">
    <location>
        <begin position="619"/>
        <end position="633"/>
    </location>
</feature>
<feature type="strand" evidence="10">
    <location>
        <begin position="641"/>
        <end position="644"/>
    </location>
</feature>
<feature type="helix" evidence="10">
    <location>
        <begin position="647"/>
        <end position="649"/>
    </location>
</feature>
<feature type="strand" evidence="11">
    <location>
        <begin position="650"/>
        <end position="653"/>
    </location>
</feature>
<feature type="strand" evidence="11">
    <location>
        <begin position="656"/>
        <end position="659"/>
    </location>
</feature>
<feature type="helix" evidence="11">
    <location>
        <begin position="663"/>
        <end position="679"/>
    </location>
</feature>
<feature type="helix" evidence="11">
    <location>
        <begin position="693"/>
        <end position="712"/>
    </location>
</feature>
<feature type="turn" evidence="10">
    <location>
        <begin position="718"/>
        <end position="721"/>
    </location>
</feature>
<feature type="helix" evidence="11">
    <location>
        <begin position="733"/>
        <end position="759"/>
    </location>
</feature>
<feature type="helix" evidence="11">
    <location>
        <begin position="764"/>
        <end position="783"/>
    </location>
</feature>
<feature type="helix" evidence="11">
    <location>
        <begin position="806"/>
        <end position="816"/>
    </location>
</feature>
<feature type="strand" evidence="11">
    <location>
        <begin position="821"/>
        <end position="823"/>
    </location>
</feature>
<feature type="helix" evidence="11">
    <location>
        <begin position="825"/>
        <end position="832"/>
    </location>
</feature>
<feature type="helix" evidence="11">
    <location>
        <begin position="836"/>
        <end position="854"/>
    </location>
</feature>
<feature type="helix" evidence="11">
    <location>
        <begin position="866"/>
        <end position="884"/>
    </location>
</feature>
<feature type="helix" evidence="11">
    <location>
        <begin position="903"/>
        <end position="920"/>
    </location>
</feature>
<feature type="helix" evidence="11">
    <location>
        <begin position="923"/>
        <end position="925"/>
    </location>
</feature>
<feature type="helix" evidence="11">
    <location>
        <begin position="926"/>
        <end position="932"/>
    </location>
</feature>
<feature type="turn" evidence="10">
    <location>
        <begin position="940"/>
        <end position="944"/>
    </location>
</feature>
<feature type="helix" evidence="11">
    <location>
        <begin position="946"/>
        <end position="967"/>
    </location>
</feature>
<feature type="helix" evidence="11">
    <location>
        <begin position="976"/>
        <end position="988"/>
    </location>
</feature>
<feature type="helix" evidence="11">
    <location>
        <begin position="998"/>
        <end position="1011"/>
    </location>
</feature>
<feature type="helix" evidence="11">
    <location>
        <begin position="1018"/>
        <end position="1032"/>
    </location>
</feature>
<feature type="turn" evidence="11">
    <location>
        <begin position="1033"/>
        <end position="1035"/>
    </location>
</feature>
<feature type="helix" evidence="11">
    <location>
        <begin position="1039"/>
        <end position="1053"/>
    </location>
</feature>
<feature type="strand" evidence="10">
    <location>
        <begin position="1056"/>
        <end position="1058"/>
    </location>
</feature>
<feature type="helix" evidence="11">
    <location>
        <begin position="1073"/>
        <end position="1076"/>
    </location>
</feature>
<feature type="turn" evidence="11">
    <location>
        <begin position="1077"/>
        <end position="1079"/>
    </location>
</feature>
<feature type="helix" evidence="11">
    <location>
        <begin position="1080"/>
        <end position="1103"/>
    </location>
</feature>
<feature type="helix" evidence="11">
    <location>
        <begin position="1128"/>
        <end position="1151"/>
    </location>
</feature>
<feature type="turn" evidence="11">
    <location>
        <begin position="1156"/>
        <end position="1158"/>
    </location>
</feature>
<feature type="helix" evidence="11">
    <location>
        <begin position="1159"/>
        <end position="1184"/>
    </location>
</feature>
<feature type="turn" evidence="10">
    <location>
        <begin position="1185"/>
        <end position="1188"/>
    </location>
</feature>
<feature type="helix" evidence="11">
    <location>
        <begin position="1193"/>
        <end position="1199"/>
    </location>
</feature>
<feature type="helix" evidence="11">
    <location>
        <begin position="1202"/>
        <end position="1205"/>
    </location>
</feature>
<feature type="helix" evidence="11">
    <location>
        <begin position="1207"/>
        <end position="1221"/>
    </location>
</feature>
<feature type="helix" evidence="11">
    <location>
        <begin position="1249"/>
        <end position="1269"/>
    </location>
</feature>
<feature type="strand" evidence="10">
    <location>
        <begin position="1270"/>
        <end position="1272"/>
    </location>
</feature>
<feature type="helix" evidence="11">
    <location>
        <begin position="1274"/>
        <end position="1278"/>
    </location>
</feature>
<feature type="strand" evidence="10">
    <location>
        <begin position="1281"/>
        <end position="1284"/>
    </location>
</feature>
<feature type="helix" evidence="10">
    <location>
        <begin position="1292"/>
        <end position="1297"/>
    </location>
</feature>
<accession>Q8K368</accession>
<accession>Q8BUE9</accession>
<accession>Q8R3G8</accession>
<gene>
    <name type="primary">Fanci</name>
</gene>
<evidence type="ECO:0000250" key="1"/>
<evidence type="ECO:0000250" key="2">
    <source>
        <dbReference type="UniProtKB" id="B0I564"/>
    </source>
</evidence>
<evidence type="ECO:0000250" key="3">
    <source>
        <dbReference type="UniProtKB" id="Q9NVI1"/>
    </source>
</evidence>
<evidence type="ECO:0000256" key="4">
    <source>
        <dbReference type="SAM" id="MobiDB-lite"/>
    </source>
</evidence>
<evidence type="ECO:0000269" key="5">
    <source>
    </source>
</evidence>
<evidence type="ECO:0000269" key="6">
    <source>
    </source>
</evidence>
<evidence type="ECO:0000303" key="7">
    <source>
    </source>
</evidence>
<evidence type="ECO:0000303" key="8">
    <source>
    </source>
</evidence>
<evidence type="ECO:0000305" key="9"/>
<evidence type="ECO:0007829" key="10">
    <source>
        <dbReference type="PDB" id="3S4W"/>
    </source>
</evidence>
<evidence type="ECO:0007829" key="11">
    <source>
        <dbReference type="PDB" id="3S51"/>
    </source>
</evidence>
<name>FANCI_MOUSE</name>
<comment type="function">
    <text evidence="2 3 5 6">Plays an essential role in the repair of DNA double-strand breaks by homologous recombination and in the repair of interstrand DNA cross-links (ICLs) by promoting FANCD2 monoubiquitination by FANCL and participating in recruitment to DNA repair sites (PubMed:17412408, PubMed:17460694). The FANCI-FANCD2 complex binds and scans double-stranded DNA (dsDNA) for DNA damage; this complex stalls at DNA junctions between double-stranded DNA and single-stranded DNA (By similarity). Participates in S phase and G2 phase checkpoint activation upon DNA damage (By similarity).</text>
</comment>
<comment type="subunit">
    <text evidence="3 5 6">Homodimer (By similarity). Part of a FANCI-FANCD2 heterodimeric complex that binds and scans dsDNA for DNA damage (PubMed:17412408, PubMed:17460694). Interacts with FANCL (By similarity). Interacts with MTMR15/FAN1 (By similarity). Interacts with POLN (By similarity). Interacts with UBL5; the interaction promotes FANCI homodimerization (By similarity).</text>
</comment>
<comment type="subcellular location">
    <subcellularLocation>
        <location evidence="3">Nucleus</location>
    </subcellularLocation>
    <subcellularLocation>
        <location evidence="3">Cytoplasm</location>
    </subcellularLocation>
    <text evidence="3">Observed in spots localized in pairs on the sister chromatids of mitotic chromosome arms and not centromeres, one on each chromatids. These foci coincide with common fragile sites. They are frequently interlinked through BLM-associated ultra-fine DNA bridges (By similarity).</text>
</comment>
<comment type="alternative products">
    <event type="alternative splicing"/>
    <isoform>
        <id>Q8K368-1</id>
        <name>1</name>
        <sequence type="displayed"/>
    </isoform>
    <isoform>
        <id>Q8K368-2</id>
        <name>2</name>
        <sequence type="described" ref="VSP_026072 VSP_026073"/>
    </isoform>
    <isoform>
        <id>Q8K368-4</id>
        <name>4</name>
        <sequence type="described" ref="VSP_026074"/>
    </isoform>
</comment>
<comment type="domain">
    <text evidence="1">The C-terminal 30 residues are probably required for function in DNA repair.</text>
</comment>
<comment type="PTM">
    <text evidence="3">Monoubiquitinated by FANCL on Lys-522 during S phase and upon genotoxic stress (By similarity). Deubiquitinated by USP1 as cells enter G2/M, or once DNA repair is completed (By similarity). Monoubiquitination requires the FANCA-FANCB-FANCC-FANCE-FANCF-FANCG-FANCM complex (By similarity). Ubiquitination is required for binding to chromatin, DNA repair, and normal cell cycle progression (By similarity). Monoubiquitination is stimulated by DNA-binding (By similarity).</text>
</comment>
<comment type="PTM">
    <text evidence="2 5">Phosphorylated in response to DNA damage by ATM and/or ATR (PubMed:17412408). Phosphorylation of FANCI promotes ubiquitination of FANCD2, which prevents DNA release from the FANCI-FANCD2 complex (By similarity).</text>
</comment>
<comment type="miscellaneous">
    <molecule>Isoform 2</molecule>
    <text evidence="9">May be produced at very low levels due to a premature stop codon in the mRNA, leading to nonsense-mediated mRNA decay.</text>
</comment>
<comment type="similarity">
    <text evidence="9">Belongs to the Fanconi anemia group I protein family.</text>
</comment>
<comment type="sequence caution" evidence="9">
    <conflict type="erroneous initiation">
        <sequence resource="EMBL-CDS" id="BAC39475"/>
    </conflict>
</comment>
<organism>
    <name type="scientific">Mus musculus</name>
    <name type="common">Mouse</name>
    <dbReference type="NCBI Taxonomy" id="10090"/>
    <lineage>
        <taxon>Eukaryota</taxon>
        <taxon>Metazoa</taxon>
        <taxon>Chordata</taxon>
        <taxon>Craniata</taxon>
        <taxon>Vertebrata</taxon>
        <taxon>Euteleostomi</taxon>
        <taxon>Mammalia</taxon>
        <taxon>Eutheria</taxon>
        <taxon>Euarchontoglires</taxon>
        <taxon>Glires</taxon>
        <taxon>Rodentia</taxon>
        <taxon>Myomorpha</taxon>
        <taxon>Muroidea</taxon>
        <taxon>Muridae</taxon>
        <taxon>Murinae</taxon>
        <taxon>Mus</taxon>
        <taxon>Mus</taxon>
    </lineage>
</organism>